<evidence type="ECO:0000250" key="1"/>
<evidence type="ECO:0000256" key="2">
    <source>
        <dbReference type="SAM" id="MobiDB-lite"/>
    </source>
</evidence>
<evidence type="ECO:0000305" key="3"/>
<reference key="1">
    <citation type="journal article" date="2015" name="Genome Announc.">
        <title>Draft genome sequence of the cellulolytic fungus Chaetomium globosum.</title>
        <authorList>
            <person name="Cuomo C.A."/>
            <person name="Untereiner W.A."/>
            <person name="Ma L.-J."/>
            <person name="Grabherr M."/>
            <person name="Birren B.W."/>
        </authorList>
    </citation>
    <scope>NUCLEOTIDE SEQUENCE [LARGE SCALE GENOMIC DNA]</scope>
    <source>
        <strain>ATCC 6205 / CBS 148.51 / DSM 1962 / NBRC 6347 / NRRL 1970</strain>
    </source>
</reference>
<gene>
    <name type="primary">ATG3</name>
    <name type="ORF">CHGG_06588</name>
</gene>
<accession>Q2H427</accession>
<name>ATG3_CHAGB</name>
<feature type="chain" id="PRO_0000317821" description="Autophagy-related protein 3">
    <location>
        <begin position="1"/>
        <end position="338"/>
    </location>
</feature>
<feature type="region of interest" description="Flexible region" evidence="1">
    <location>
        <begin position="85"/>
        <end position="167"/>
    </location>
</feature>
<feature type="region of interest" description="Disordered" evidence="2">
    <location>
        <begin position="135"/>
        <end position="170"/>
    </location>
</feature>
<feature type="region of interest" description="Handle region" evidence="1">
    <location>
        <begin position="242"/>
        <end position="319"/>
    </location>
</feature>
<feature type="compositionally biased region" description="Acidic residues" evidence="2">
    <location>
        <begin position="141"/>
        <end position="158"/>
    </location>
</feature>
<feature type="active site" description="Glycyl thioester intermediate" evidence="1">
    <location>
        <position position="238"/>
    </location>
</feature>
<dbReference type="EMBL" id="CH408031">
    <property type="protein sequence ID" value="EAQ89969.1"/>
    <property type="molecule type" value="Genomic_DNA"/>
</dbReference>
<dbReference type="RefSeq" id="XP_001222683.1">
    <property type="nucleotide sequence ID" value="XM_001222682.1"/>
</dbReference>
<dbReference type="SMR" id="Q2H427"/>
<dbReference type="FunCoup" id="Q2H427">
    <property type="interactions" value="964"/>
</dbReference>
<dbReference type="STRING" id="306901.Q2H427"/>
<dbReference type="GeneID" id="4390343"/>
<dbReference type="VEuPathDB" id="FungiDB:CHGG_06588"/>
<dbReference type="eggNOG" id="KOG2981">
    <property type="taxonomic scope" value="Eukaryota"/>
</dbReference>
<dbReference type="HOGENOM" id="CLU_027518_2_0_1"/>
<dbReference type="InParanoid" id="Q2H427"/>
<dbReference type="OMA" id="HCPTWSW"/>
<dbReference type="OrthoDB" id="1584384at2759"/>
<dbReference type="Proteomes" id="UP000001056">
    <property type="component" value="Unassembled WGS sequence"/>
</dbReference>
<dbReference type="GO" id="GO:0005829">
    <property type="term" value="C:cytosol"/>
    <property type="evidence" value="ECO:0007669"/>
    <property type="project" value="EnsemblFungi"/>
</dbReference>
<dbReference type="GO" id="GO:0005739">
    <property type="term" value="C:mitochondrion"/>
    <property type="evidence" value="ECO:0007669"/>
    <property type="project" value="EnsemblFungi"/>
</dbReference>
<dbReference type="GO" id="GO:0061908">
    <property type="term" value="C:phagophore"/>
    <property type="evidence" value="ECO:0007669"/>
    <property type="project" value="EnsemblFungi"/>
</dbReference>
<dbReference type="GO" id="GO:0000407">
    <property type="term" value="C:phagophore assembly site"/>
    <property type="evidence" value="ECO:0007669"/>
    <property type="project" value="EnsemblFungi"/>
</dbReference>
<dbReference type="GO" id="GO:0019776">
    <property type="term" value="F:Atg8-family ligase activity"/>
    <property type="evidence" value="ECO:0007669"/>
    <property type="project" value="EnsemblFungi"/>
</dbReference>
<dbReference type="GO" id="GO:0000045">
    <property type="term" value="P:autophagosome assembly"/>
    <property type="evidence" value="ECO:0007669"/>
    <property type="project" value="EnsemblFungi"/>
</dbReference>
<dbReference type="GO" id="GO:0000422">
    <property type="term" value="P:autophagy of mitochondrion"/>
    <property type="evidence" value="ECO:0007669"/>
    <property type="project" value="EnsemblFungi"/>
</dbReference>
<dbReference type="GO" id="GO:0061723">
    <property type="term" value="P:glycophagy"/>
    <property type="evidence" value="ECO:0007669"/>
    <property type="project" value="TreeGrafter"/>
</dbReference>
<dbReference type="GO" id="GO:0034727">
    <property type="term" value="P:piecemeal microautophagy of the nucleus"/>
    <property type="evidence" value="ECO:0007669"/>
    <property type="project" value="EnsemblFungi"/>
</dbReference>
<dbReference type="GO" id="GO:0006612">
    <property type="term" value="P:protein targeting to membrane"/>
    <property type="evidence" value="ECO:0007669"/>
    <property type="project" value="EnsemblFungi"/>
</dbReference>
<dbReference type="GO" id="GO:0015031">
    <property type="term" value="P:protein transport"/>
    <property type="evidence" value="ECO:0007669"/>
    <property type="project" value="UniProtKB-KW"/>
</dbReference>
<dbReference type="InterPro" id="IPR007135">
    <property type="entry name" value="Atg3/Atg10"/>
</dbReference>
<dbReference type="PANTHER" id="PTHR12866">
    <property type="entry name" value="UBIQUITIN-LIKE-CONJUGATING ENZYME ATG3"/>
    <property type="match status" value="1"/>
</dbReference>
<dbReference type="PANTHER" id="PTHR12866:SF2">
    <property type="entry name" value="UBIQUITIN-LIKE-CONJUGATING ENZYME ATG3"/>
    <property type="match status" value="1"/>
</dbReference>
<dbReference type="Pfam" id="PF03987">
    <property type="entry name" value="Autophagy_act_C"/>
    <property type="match status" value="1"/>
</dbReference>
<proteinExistence type="inferred from homology"/>
<keyword id="KW-0072">Autophagy</keyword>
<keyword id="KW-0963">Cytoplasm</keyword>
<keyword id="KW-0653">Protein transport</keyword>
<keyword id="KW-1185">Reference proteome</keyword>
<keyword id="KW-0813">Transport</keyword>
<keyword id="KW-0833">Ubl conjugation pathway</keyword>
<sequence length="338" mass="37395">MNIIYSTVNSLRDRYTPASHTSTFRNTGEITPEEFVAAGDYLVFKFPSWTWSDAETPAKRVAHLPPEKQYLVTRNVPCHRRLNDDFAGDAGHEEAVVEGGKNSGDDGWLRTGGLASSQPLKARDVRTVDDAGNVADRGAIDDEDDIPDMEEEEDDEAIIQDGSHGKHSGSRTYSLYITYSPWYKTPRMYMLGYQPNGQALIPHLMMEDIVGDYKDKTVTLEDFPFFATSVKTASIHPCKHAPVMKTLLDRADAALKLRKERQKAGLEVGSNQGLEGLEAQVVKLAVSGTGTDVANDANDEWEEVQHDAADQDVAIRVDQYLFIASVTPGIEHDFTMGV</sequence>
<protein>
    <recommendedName>
        <fullName>Autophagy-related protein 3</fullName>
    </recommendedName>
    <alternativeName>
        <fullName>Autophagy-related E2-like conjugation enzyme ATG3</fullName>
    </alternativeName>
</protein>
<organism>
    <name type="scientific">Chaetomium globosum (strain ATCC 6205 / CBS 148.51 / DSM 1962 / NBRC 6347 / NRRL 1970)</name>
    <name type="common">Soil fungus</name>
    <dbReference type="NCBI Taxonomy" id="306901"/>
    <lineage>
        <taxon>Eukaryota</taxon>
        <taxon>Fungi</taxon>
        <taxon>Dikarya</taxon>
        <taxon>Ascomycota</taxon>
        <taxon>Pezizomycotina</taxon>
        <taxon>Sordariomycetes</taxon>
        <taxon>Sordariomycetidae</taxon>
        <taxon>Sordariales</taxon>
        <taxon>Chaetomiaceae</taxon>
        <taxon>Chaetomium</taxon>
    </lineage>
</organism>
<comment type="function">
    <text evidence="1">E2 conjugating enzyme required for the cytoplasm to vacuole transport (Cvt) and autophagy. Required for selective autophagic degradation of the nucleus (nucleophagy) as well as for mitophagy which contributes to regulate mitochondrial quantity and quality by eliminating the mitochondria to a basal level to fulfill cellular energy requirements and preventing excess ROS production. Responsible for the E2-like covalent binding of phosphatidylethanolamine to the C-terminal Gly of ATG8. The ATG12-ATG5 conjugate plays a role of an E3 and promotes the transfer of ATG8 from ATG3 to phosphatidylethanolamine (PE). This step is required for the membrane association of ATG8. The formation of the ATG8-phosphatidylethanolamine conjugate is essential for autophagy and for the cytoplasm to vacuole transport (Cvt). The ATG8-PE conjugate mediates tethering between adjacent membranes and stimulates membrane hemifusion, leading to expansion of the autophagosomal membrane during autophagy (By similarity).</text>
</comment>
<comment type="subunit">
    <text evidence="1">Monomer. Interacts with ATG8 through an intermediate thioester bond through the C-terminal Gly of ATG8. Also interacts with the 40 amino acid C-terminal region of the E1-like ATG7 enzyme. Also interacts with the ATG12-ATG5 conjugate.</text>
</comment>
<comment type="subcellular location">
    <subcellularLocation>
        <location evidence="1">Cytoplasm</location>
    </subcellularLocation>
</comment>
<comment type="domain">
    <text evidence="1">The N-terminal region is involved in phosphatidylethanolamine-binding and is required for ATG8-PE conjugation.</text>
</comment>
<comment type="domain">
    <text evidence="1">The flexible region (FR) is required for ATG7-binding.</text>
</comment>
<comment type="domain">
    <text evidence="1">The handle region (HR) contains the ATG8 interaction motif (AIM) and mediates binding to ATG8. It is crucial for the cytoplasm-to-vacuole targeting pathway (By similarity).</text>
</comment>
<comment type="similarity">
    <text evidence="3">Belongs to the ATG3 family.</text>
</comment>